<name>ATPL_SHEAM</name>
<protein>
    <recommendedName>
        <fullName evidence="1">ATP synthase subunit c</fullName>
    </recommendedName>
    <alternativeName>
        <fullName evidence="1">ATP synthase F(0) sector subunit c</fullName>
    </alternativeName>
    <alternativeName>
        <fullName evidence="1">F-type ATPase subunit c</fullName>
        <shortName evidence="1">F-ATPase subunit c</shortName>
    </alternativeName>
    <alternativeName>
        <fullName evidence="1">Lipid-binding protein</fullName>
    </alternativeName>
</protein>
<comment type="function">
    <text evidence="1">F(1)F(0) ATP synthase produces ATP from ADP in the presence of a proton or sodium gradient. F-type ATPases consist of two structural domains, F(1) containing the extramembraneous catalytic core and F(0) containing the membrane proton channel, linked together by a central stalk and a peripheral stalk. During catalysis, ATP synthesis in the catalytic domain of F(1) is coupled via a rotary mechanism of the central stalk subunits to proton translocation.</text>
</comment>
<comment type="function">
    <text evidence="1">Key component of the F(0) channel; it plays a direct role in translocation across the membrane. A homomeric c-ring of between 10-14 subunits forms the central stalk rotor element with the F(1) delta and epsilon subunits.</text>
</comment>
<comment type="subunit">
    <text evidence="1">F-type ATPases have 2 components, F(1) - the catalytic core - and F(0) - the membrane proton channel. F(1) has five subunits: alpha(3), beta(3), gamma(1), delta(1), epsilon(1). F(0) has three main subunits: a(1), b(2) and c(10-14). The alpha and beta chains form an alternating ring which encloses part of the gamma chain. F(1) is attached to F(0) by a central stalk formed by the gamma and epsilon chains, while a peripheral stalk is formed by the delta and b chains.</text>
</comment>
<comment type="subcellular location">
    <subcellularLocation>
        <location evidence="1">Cell inner membrane</location>
        <topology evidence="1">Multi-pass membrane protein</topology>
    </subcellularLocation>
</comment>
<comment type="similarity">
    <text evidence="1">Belongs to the ATPase C chain family.</text>
</comment>
<feature type="chain" id="PRO_1000184467" description="ATP synthase subunit c">
    <location>
        <begin position="1"/>
        <end position="83"/>
    </location>
</feature>
<feature type="transmembrane region" description="Helical" evidence="1">
    <location>
        <begin position="10"/>
        <end position="30"/>
    </location>
</feature>
<feature type="transmembrane region" description="Helical" evidence="1">
    <location>
        <begin position="52"/>
        <end position="72"/>
    </location>
</feature>
<feature type="site" description="Reversibly protonated during proton transport" evidence="1">
    <location>
        <position position="60"/>
    </location>
</feature>
<dbReference type="EMBL" id="CP000507">
    <property type="protein sequence ID" value="ABM01852.1"/>
    <property type="molecule type" value="Genomic_DNA"/>
</dbReference>
<dbReference type="RefSeq" id="WP_011761755.1">
    <property type="nucleotide sequence ID" value="NC_008700.1"/>
</dbReference>
<dbReference type="SMR" id="A1SBU5"/>
<dbReference type="STRING" id="326297.Sama_3649"/>
<dbReference type="KEGG" id="saz:Sama_3649"/>
<dbReference type="eggNOG" id="ENOG5032S3K">
    <property type="taxonomic scope" value="Bacteria"/>
</dbReference>
<dbReference type="HOGENOM" id="CLU_148047_1_0_6"/>
<dbReference type="OrthoDB" id="9811659at2"/>
<dbReference type="Proteomes" id="UP000009175">
    <property type="component" value="Chromosome"/>
</dbReference>
<dbReference type="GO" id="GO:0005886">
    <property type="term" value="C:plasma membrane"/>
    <property type="evidence" value="ECO:0007669"/>
    <property type="project" value="UniProtKB-SubCell"/>
</dbReference>
<dbReference type="GO" id="GO:0045259">
    <property type="term" value="C:proton-transporting ATP synthase complex"/>
    <property type="evidence" value="ECO:0007669"/>
    <property type="project" value="UniProtKB-KW"/>
</dbReference>
<dbReference type="GO" id="GO:0033177">
    <property type="term" value="C:proton-transporting two-sector ATPase complex, proton-transporting domain"/>
    <property type="evidence" value="ECO:0007669"/>
    <property type="project" value="InterPro"/>
</dbReference>
<dbReference type="GO" id="GO:0008289">
    <property type="term" value="F:lipid binding"/>
    <property type="evidence" value="ECO:0007669"/>
    <property type="project" value="UniProtKB-KW"/>
</dbReference>
<dbReference type="GO" id="GO:0046933">
    <property type="term" value="F:proton-transporting ATP synthase activity, rotational mechanism"/>
    <property type="evidence" value="ECO:0007669"/>
    <property type="project" value="UniProtKB-UniRule"/>
</dbReference>
<dbReference type="CDD" id="cd18185">
    <property type="entry name" value="ATP-synt_Fo_c_ATPE"/>
    <property type="match status" value="1"/>
</dbReference>
<dbReference type="FunFam" id="1.20.20.10:FF:000002">
    <property type="entry name" value="ATP synthase subunit c"/>
    <property type="match status" value="1"/>
</dbReference>
<dbReference type="Gene3D" id="1.20.20.10">
    <property type="entry name" value="F1F0 ATP synthase subunit C"/>
    <property type="match status" value="1"/>
</dbReference>
<dbReference type="HAMAP" id="MF_01396">
    <property type="entry name" value="ATP_synth_c_bact"/>
    <property type="match status" value="1"/>
</dbReference>
<dbReference type="InterPro" id="IPR005953">
    <property type="entry name" value="ATP_synth_csu_bac/chlpt"/>
</dbReference>
<dbReference type="InterPro" id="IPR000454">
    <property type="entry name" value="ATP_synth_F0_csu"/>
</dbReference>
<dbReference type="InterPro" id="IPR020537">
    <property type="entry name" value="ATP_synth_F0_csu_DDCD_BS"/>
</dbReference>
<dbReference type="InterPro" id="IPR038662">
    <property type="entry name" value="ATP_synth_F0_csu_sf"/>
</dbReference>
<dbReference type="InterPro" id="IPR002379">
    <property type="entry name" value="ATPase_proteolipid_c-like_dom"/>
</dbReference>
<dbReference type="InterPro" id="IPR035921">
    <property type="entry name" value="F/V-ATP_Csub_sf"/>
</dbReference>
<dbReference type="NCBIfam" id="TIGR01260">
    <property type="entry name" value="ATP_synt_c"/>
    <property type="match status" value="1"/>
</dbReference>
<dbReference type="NCBIfam" id="NF005363">
    <property type="entry name" value="PRK06876.1"/>
    <property type="match status" value="1"/>
</dbReference>
<dbReference type="Pfam" id="PF00137">
    <property type="entry name" value="ATP-synt_C"/>
    <property type="match status" value="1"/>
</dbReference>
<dbReference type="PRINTS" id="PR00124">
    <property type="entry name" value="ATPASEC"/>
</dbReference>
<dbReference type="SUPFAM" id="SSF81333">
    <property type="entry name" value="F1F0 ATP synthase subunit C"/>
    <property type="match status" value="1"/>
</dbReference>
<dbReference type="PROSITE" id="PS00605">
    <property type="entry name" value="ATPASE_C"/>
    <property type="match status" value="1"/>
</dbReference>
<organism>
    <name type="scientific">Shewanella amazonensis (strain ATCC BAA-1098 / SB2B)</name>
    <dbReference type="NCBI Taxonomy" id="326297"/>
    <lineage>
        <taxon>Bacteria</taxon>
        <taxon>Pseudomonadati</taxon>
        <taxon>Pseudomonadota</taxon>
        <taxon>Gammaproteobacteria</taxon>
        <taxon>Alteromonadales</taxon>
        <taxon>Shewanellaceae</taxon>
        <taxon>Shewanella</taxon>
    </lineage>
</organism>
<gene>
    <name evidence="1" type="primary">atpE</name>
    <name type="ordered locus">Sama_3649</name>
</gene>
<accession>A1SBU5</accession>
<proteinExistence type="inferred from homology"/>
<evidence type="ECO:0000255" key="1">
    <source>
        <dbReference type="HAMAP-Rule" id="MF_01396"/>
    </source>
</evidence>
<sequence>METILGFTAIAVALLIGMGALGTAIGFGLLGGKFLEGAARQPEMAPMLQVKMFIVAGLLDAVTMIGVGIALYMLFTNPLGAML</sequence>
<reference key="1">
    <citation type="submission" date="2006-12" db="EMBL/GenBank/DDBJ databases">
        <title>Complete sequence of Shewanella amazonensis SB2B.</title>
        <authorList>
            <consortium name="US DOE Joint Genome Institute"/>
            <person name="Copeland A."/>
            <person name="Lucas S."/>
            <person name="Lapidus A."/>
            <person name="Barry K."/>
            <person name="Detter J.C."/>
            <person name="Glavina del Rio T."/>
            <person name="Hammon N."/>
            <person name="Israni S."/>
            <person name="Dalin E."/>
            <person name="Tice H."/>
            <person name="Pitluck S."/>
            <person name="Munk A.C."/>
            <person name="Brettin T."/>
            <person name="Bruce D."/>
            <person name="Han C."/>
            <person name="Tapia R."/>
            <person name="Gilna P."/>
            <person name="Schmutz J."/>
            <person name="Larimer F."/>
            <person name="Land M."/>
            <person name="Hauser L."/>
            <person name="Kyrpides N."/>
            <person name="Mikhailova N."/>
            <person name="Fredrickson J."/>
            <person name="Richardson P."/>
        </authorList>
    </citation>
    <scope>NUCLEOTIDE SEQUENCE [LARGE SCALE GENOMIC DNA]</scope>
    <source>
        <strain>ATCC BAA-1098 / SB2B</strain>
    </source>
</reference>
<keyword id="KW-0066">ATP synthesis</keyword>
<keyword id="KW-0997">Cell inner membrane</keyword>
<keyword id="KW-1003">Cell membrane</keyword>
<keyword id="KW-0138">CF(0)</keyword>
<keyword id="KW-0375">Hydrogen ion transport</keyword>
<keyword id="KW-0406">Ion transport</keyword>
<keyword id="KW-0446">Lipid-binding</keyword>
<keyword id="KW-0472">Membrane</keyword>
<keyword id="KW-1185">Reference proteome</keyword>
<keyword id="KW-0812">Transmembrane</keyword>
<keyword id="KW-1133">Transmembrane helix</keyword>
<keyword id="KW-0813">Transport</keyword>